<name>SDA1_DICDI</name>
<keyword id="KW-0175">Coiled coil</keyword>
<keyword id="KW-0539">Nucleus</keyword>
<keyword id="KW-0653">Protein transport</keyword>
<keyword id="KW-1185">Reference proteome</keyword>
<keyword id="KW-0690">Ribosome biogenesis</keyword>
<keyword id="KW-0813">Transport</keyword>
<comment type="function">
    <text evidence="1">Required for 60S pre-ribosomal subunits export to the cytoplasm.</text>
</comment>
<comment type="subcellular location">
    <subcellularLocation>
        <location evidence="1">Nucleus</location>
        <location evidence="1">Nucleolus</location>
    </subcellularLocation>
</comment>
<comment type="similarity">
    <text evidence="4">Belongs to the SDA1 family.</text>
</comment>
<dbReference type="EMBL" id="AAFI02000005">
    <property type="protein sequence ID" value="EAL72194.1"/>
    <property type="molecule type" value="Genomic_DNA"/>
</dbReference>
<dbReference type="RefSeq" id="XP_646189.1">
    <property type="nucleotide sequence ID" value="XM_641097.1"/>
</dbReference>
<dbReference type="SMR" id="Q55DE2"/>
<dbReference type="FunCoup" id="Q55DE2">
    <property type="interactions" value="786"/>
</dbReference>
<dbReference type="STRING" id="44689.Q55DE2"/>
<dbReference type="PaxDb" id="44689-DDB0266533"/>
<dbReference type="EnsemblProtists" id="EAL72194">
    <property type="protein sequence ID" value="EAL72194"/>
    <property type="gene ID" value="DDB_G0269688"/>
</dbReference>
<dbReference type="GeneID" id="8617142"/>
<dbReference type="KEGG" id="ddi:DDB_G0269688"/>
<dbReference type="dictyBase" id="DDB_G0269688">
    <property type="gene designation" value="sdad1"/>
</dbReference>
<dbReference type="VEuPathDB" id="AmoebaDB:DDB_G0269688"/>
<dbReference type="eggNOG" id="KOG2229">
    <property type="taxonomic scope" value="Eukaryota"/>
</dbReference>
<dbReference type="HOGENOM" id="CLU_009161_3_1_1"/>
<dbReference type="InParanoid" id="Q55DE2"/>
<dbReference type="OMA" id="AMYKTYK"/>
<dbReference type="PhylomeDB" id="Q55DE2"/>
<dbReference type="PRO" id="PR:Q55DE2"/>
<dbReference type="Proteomes" id="UP000002195">
    <property type="component" value="Chromosome 1"/>
</dbReference>
<dbReference type="GO" id="GO:0005730">
    <property type="term" value="C:nucleolus"/>
    <property type="evidence" value="ECO:0000318"/>
    <property type="project" value="GO_Central"/>
</dbReference>
<dbReference type="GO" id="GO:0015031">
    <property type="term" value="P:protein transport"/>
    <property type="evidence" value="ECO:0007669"/>
    <property type="project" value="UniProtKB-KW"/>
</dbReference>
<dbReference type="GO" id="GO:0042273">
    <property type="term" value="P:ribosomal large subunit biogenesis"/>
    <property type="evidence" value="ECO:0000318"/>
    <property type="project" value="GO_Central"/>
</dbReference>
<dbReference type="GO" id="GO:0000055">
    <property type="term" value="P:ribosomal large subunit export from nucleus"/>
    <property type="evidence" value="ECO:0000318"/>
    <property type="project" value="GO_Central"/>
</dbReference>
<dbReference type="InterPro" id="IPR016024">
    <property type="entry name" value="ARM-type_fold"/>
</dbReference>
<dbReference type="InterPro" id="IPR027312">
    <property type="entry name" value="Sda1"/>
</dbReference>
<dbReference type="InterPro" id="IPR048292">
    <property type="entry name" value="SDA1_C"/>
</dbReference>
<dbReference type="InterPro" id="IPR007949">
    <property type="entry name" value="SDA1_MD"/>
</dbReference>
<dbReference type="InterPro" id="IPR012977">
    <property type="entry name" value="SDA1_N"/>
</dbReference>
<dbReference type="PANTHER" id="PTHR12730">
    <property type="entry name" value="HSDA/SDA1-RELATED"/>
    <property type="match status" value="1"/>
</dbReference>
<dbReference type="PANTHER" id="PTHR12730:SF0">
    <property type="entry name" value="PROTEIN SDA1 HOMOLOG"/>
    <property type="match status" value="1"/>
</dbReference>
<dbReference type="Pfam" id="PF21638">
    <property type="entry name" value="SDA1_C"/>
    <property type="match status" value="1"/>
</dbReference>
<dbReference type="Pfam" id="PF05285">
    <property type="entry name" value="SDA1_dom"/>
    <property type="match status" value="1"/>
</dbReference>
<dbReference type="Pfam" id="PF08158">
    <property type="entry name" value="SDA1_HEAT"/>
    <property type="match status" value="1"/>
</dbReference>
<dbReference type="SUPFAM" id="SSF48371">
    <property type="entry name" value="ARM repeat"/>
    <property type="match status" value="1"/>
</dbReference>
<gene>
    <name type="primary">sdad1</name>
    <name type="ORF">DDB_G0269688</name>
</gene>
<feature type="chain" id="PRO_0000328429" description="Protein SDA1 homolog">
    <location>
        <begin position="1"/>
        <end position="756"/>
    </location>
</feature>
<feature type="region of interest" description="Disordered" evidence="3">
    <location>
        <begin position="494"/>
        <end position="615"/>
    </location>
</feature>
<feature type="region of interest" description="Disordered" evidence="3">
    <location>
        <begin position="638"/>
        <end position="756"/>
    </location>
</feature>
<feature type="coiled-coil region" evidence="2">
    <location>
        <begin position="227"/>
        <end position="282"/>
    </location>
</feature>
<feature type="compositionally biased region" description="Acidic residues" evidence="3">
    <location>
        <begin position="494"/>
        <end position="514"/>
    </location>
</feature>
<feature type="compositionally biased region" description="Acidic residues" evidence="3">
    <location>
        <begin position="521"/>
        <end position="596"/>
    </location>
</feature>
<feature type="compositionally biased region" description="Basic and acidic residues" evidence="3">
    <location>
        <begin position="605"/>
        <end position="615"/>
    </location>
</feature>
<feature type="compositionally biased region" description="Acidic residues" evidence="3">
    <location>
        <begin position="647"/>
        <end position="656"/>
    </location>
</feature>
<feature type="compositionally biased region" description="Basic and acidic residues" evidence="3">
    <location>
        <begin position="677"/>
        <end position="691"/>
    </location>
</feature>
<feature type="compositionally biased region" description="Basic residues" evidence="3">
    <location>
        <begin position="725"/>
        <end position="735"/>
    </location>
</feature>
<feature type="compositionally biased region" description="Basic and acidic residues" evidence="3">
    <location>
        <begin position="736"/>
        <end position="749"/>
    </location>
</feature>
<accession>Q55DE2</accession>
<reference key="1">
    <citation type="journal article" date="2005" name="Nature">
        <title>The genome of the social amoeba Dictyostelium discoideum.</title>
        <authorList>
            <person name="Eichinger L."/>
            <person name="Pachebat J.A."/>
            <person name="Gloeckner G."/>
            <person name="Rajandream M.A."/>
            <person name="Sucgang R."/>
            <person name="Berriman M."/>
            <person name="Song J."/>
            <person name="Olsen R."/>
            <person name="Szafranski K."/>
            <person name="Xu Q."/>
            <person name="Tunggal B."/>
            <person name="Kummerfeld S."/>
            <person name="Madera M."/>
            <person name="Konfortov B.A."/>
            <person name="Rivero F."/>
            <person name="Bankier A.T."/>
            <person name="Lehmann R."/>
            <person name="Hamlin N."/>
            <person name="Davies R."/>
            <person name="Gaudet P."/>
            <person name="Fey P."/>
            <person name="Pilcher K."/>
            <person name="Chen G."/>
            <person name="Saunders D."/>
            <person name="Sodergren E.J."/>
            <person name="Davis P."/>
            <person name="Kerhornou A."/>
            <person name="Nie X."/>
            <person name="Hall N."/>
            <person name="Anjard C."/>
            <person name="Hemphill L."/>
            <person name="Bason N."/>
            <person name="Farbrother P."/>
            <person name="Desany B."/>
            <person name="Just E."/>
            <person name="Morio T."/>
            <person name="Rost R."/>
            <person name="Churcher C.M."/>
            <person name="Cooper J."/>
            <person name="Haydock S."/>
            <person name="van Driessche N."/>
            <person name="Cronin A."/>
            <person name="Goodhead I."/>
            <person name="Muzny D.M."/>
            <person name="Mourier T."/>
            <person name="Pain A."/>
            <person name="Lu M."/>
            <person name="Harper D."/>
            <person name="Lindsay R."/>
            <person name="Hauser H."/>
            <person name="James K.D."/>
            <person name="Quiles M."/>
            <person name="Madan Babu M."/>
            <person name="Saito T."/>
            <person name="Buchrieser C."/>
            <person name="Wardroper A."/>
            <person name="Felder M."/>
            <person name="Thangavelu M."/>
            <person name="Johnson D."/>
            <person name="Knights A."/>
            <person name="Loulseged H."/>
            <person name="Mungall K.L."/>
            <person name="Oliver K."/>
            <person name="Price C."/>
            <person name="Quail M.A."/>
            <person name="Urushihara H."/>
            <person name="Hernandez J."/>
            <person name="Rabbinowitsch E."/>
            <person name="Steffen D."/>
            <person name="Sanders M."/>
            <person name="Ma J."/>
            <person name="Kohara Y."/>
            <person name="Sharp S."/>
            <person name="Simmonds M.N."/>
            <person name="Spiegler S."/>
            <person name="Tivey A."/>
            <person name="Sugano S."/>
            <person name="White B."/>
            <person name="Walker D."/>
            <person name="Woodward J.R."/>
            <person name="Winckler T."/>
            <person name="Tanaka Y."/>
            <person name="Shaulsky G."/>
            <person name="Schleicher M."/>
            <person name="Weinstock G.M."/>
            <person name="Rosenthal A."/>
            <person name="Cox E.C."/>
            <person name="Chisholm R.L."/>
            <person name="Gibbs R.A."/>
            <person name="Loomis W.F."/>
            <person name="Platzer M."/>
            <person name="Kay R.R."/>
            <person name="Williams J.G."/>
            <person name="Dear P.H."/>
            <person name="Noegel A.A."/>
            <person name="Barrell B.G."/>
            <person name="Kuspa A."/>
        </authorList>
    </citation>
    <scope>NUCLEOTIDE SEQUENCE [LARGE SCALE GENOMIC DNA]</scope>
    <source>
        <strain>AX4</strain>
    </source>
</reference>
<protein>
    <recommendedName>
        <fullName>Protein SDA1 homolog</fullName>
    </recommendedName>
    <alternativeName>
        <fullName>SDA1 domain-containing protein 1 homolog</fullName>
    </alternativeName>
</protein>
<organism>
    <name type="scientific">Dictyostelium discoideum</name>
    <name type="common">Social amoeba</name>
    <dbReference type="NCBI Taxonomy" id="44689"/>
    <lineage>
        <taxon>Eukaryota</taxon>
        <taxon>Amoebozoa</taxon>
        <taxon>Evosea</taxon>
        <taxon>Eumycetozoa</taxon>
        <taxon>Dictyostelia</taxon>
        <taxon>Dictyosteliales</taxon>
        <taxon>Dictyosteliaceae</taxon>
        <taxon>Dictyostelium</taxon>
    </lineage>
</organism>
<sequence>MGTRILDLLQLQNLTKRDPSAYKEEFLLQYQHYLTQLQIFQLKPTKEFKHFSQLVSYLSHVCVCYPKELSEFPKQISDLLENNCNNLEPELRRILAKSLILMRNRNLLPQIQMLSLFFKLFRVHDKPLRSLLYSHIVADIKNTNLKQKNQKLNRTLQNFMFTMMNDDSEIASKMSLKVMIELFRKKIWHDTKTVNVISNGVFSKNSKILITTLNFFLHIDNPDKPDEEEEDEAVKEKRAKDNFRKKSLAHRVGKKTKGRITRLAKSKVDLKKAKQEEDNKLQPNFPAIELIHDPQGYCDKLFNVLVKTTEKFETRIMIMNFISRLIYVHKLMVYNFYPFLQKYLQPHQKNITYLLAVLAQSCHELVDPDVLKPLVMTIAKYFVNDGCGSDVIAIGLNTIRSICSRCPLAIDTVLLADLIQYREKKEKGVAMASKSLLQFFKDNYPSMLPKKERGKNKTDIGLLAFGHQKVSQGIDGLDLLMDEELNARLDAIEAGEEFESDDDSDSDSDDEGWEDVNTTTADDDNNSEWVSDDDDEEGEEDEEVEDEEDEEEVDEEELEDDEEGDWESGEEIEGDDDDDEEWEEVEEEVEEEEEEEIKPTKKKSQQKEKVEVLRTDDIKVLTDEELIRIRKLRILKEARENNKQYEDMDQDDDENGENVHGLIRPEDLQGAHKKKKEEKLERIARAKEGRDGGYGSKASRRDKTGKSTTNEYKAKVTKPFVLTLKTKKVRGKSLKSFRDKQIGQREHSARQKRGRH</sequence>
<evidence type="ECO:0000250" key="1"/>
<evidence type="ECO:0000255" key="2"/>
<evidence type="ECO:0000256" key="3">
    <source>
        <dbReference type="SAM" id="MobiDB-lite"/>
    </source>
</evidence>
<evidence type="ECO:0000305" key="4"/>
<proteinExistence type="inferred from homology"/>